<organism>
    <name type="scientific">Arabidopsis thaliana</name>
    <name type="common">Mouse-ear cress</name>
    <dbReference type="NCBI Taxonomy" id="3702"/>
    <lineage>
        <taxon>Eukaryota</taxon>
        <taxon>Viridiplantae</taxon>
        <taxon>Streptophyta</taxon>
        <taxon>Embryophyta</taxon>
        <taxon>Tracheophyta</taxon>
        <taxon>Spermatophyta</taxon>
        <taxon>Magnoliopsida</taxon>
        <taxon>eudicotyledons</taxon>
        <taxon>Gunneridae</taxon>
        <taxon>Pentapetalae</taxon>
        <taxon>rosids</taxon>
        <taxon>malvids</taxon>
        <taxon>Brassicales</taxon>
        <taxon>Brassicaceae</taxon>
        <taxon>Camelineae</taxon>
        <taxon>Arabidopsis</taxon>
    </lineage>
</organism>
<dbReference type="EMBL" id="AC006434">
    <property type="protein sequence ID" value="AAF87110.1"/>
    <property type="status" value="ALT_SEQ"/>
    <property type="molecule type" value="Genomic_DNA"/>
</dbReference>
<dbReference type="EMBL" id="CP002684">
    <property type="protein sequence ID" value="AEE35751.1"/>
    <property type="molecule type" value="Genomic_DNA"/>
</dbReference>
<dbReference type="RefSeq" id="NP_001185405.1">
    <molecule id="F4I0N3-1"/>
    <property type="nucleotide sequence ID" value="NM_001198476.2"/>
</dbReference>
<dbReference type="SMR" id="F4I0N3"/>
<dbReference type="FunCoup" id="F4I0N3">
    <property type="interactions" value="425"/>
</dbReference>
<dbReference type="STRING" id="3702.F4I0N3"/>
<dbReference type="PaxDb" id="3702-AT1G75720.1"/>
<dbReference type="EnsemblPlants" id="AT1G75720.2">
    <molecule id="F4I0N3-1"/>
    <property type="protein sequence ID" value="AT1G75720.2"/>
    <property type="gene ID" value="AT1G75720"/>
</dbReference>
<dbReference type="GeneID" id="843906"/>
<dbReference type="Gramene" id="AT1G75720.2">
    <molecule id="F4I0N3-1"/>
    <property type="protein sequence ID" value="AT1G75720.2"/>
    <property type="gene ID" value="AT1G75720"/>
</dbReference>
<dbReference type="KEGG" id="ath:AT1G75720"/>
<dbReference type="Araport" id="AT1G75720"/>
<dbReference type="TAIR" id="AT1G75720"/>
<dbReference type="eggNOG" id="ENOG502RXY7">
    <property type="taxonomic scope" value="Eukaryota"/>
</dbReference>
<dbReference type="HOGENOM" id="CLU_078358_1_0_1"/>
<dbReference type="InParanoid" id="F4I0N3"/>
<dbReference type="PRO" id="PR:F4I0N3"/>
<dbReference type="Proteomes" id="UP000006548">
    <property type="component" value="Chromosome 1"/>
</dbReference>
<dbReference type="ExpressionAtlas" id="F4I0N3">
    <property type="expression patterns" value="baseline and differential"/>
</dbReference>
<dbReference type="PANTHER" id="PTHR32054">
    <property type="entry name" value="HEAVY CHAIN, PUTATIVE, EXPRESSED-RELATED-RELATED"/>
    <property type="match status" value="1"/>
</dbReference>
<dbReference type="PANTHER" id="PTHR32054:SF9">
    <property type="entry name" value="OS04G0116200 PROTEIN"/>
    <property type="match status" value="1"/>
</dbReference>
<proteinExistence type="inferred from homology"/>
<gene>
    <name type="ordered locus">At1g75720</name>
    <name type="ORF">F10A5.8</name>
</gene>
<protein>
    <recommendedName>
        <fullName>WEB family protein At1g75720</fullName>
    </recommendedName>
</protein>
<name>Y1572_ARATH</name>
<accession>F4I0N3</accession>
<accession>Q9LR12</accession>
<keyword id="KW-0025">Alternative splicing</keyword>
<keyword id="KW-0175">Coiled coil</keyword>
<keyword id="KW-1185">Reference proteome</keyword>
<evidence type="ECO:0000255" key="1"/>
<evidence type="ECO:0000256" key="2">
    <source>
        <dbReference type="SAM" id="MobiDB-lite"/>
    </source>
</evidence>
<evidence type="ECO:0000305" key="3"/>
<reference key="1">
    <citation type="journal article" date="2000" name="Nature">
        <title>Sequence and analysis of chromosome 1 of the plant Arabidopsis thaliana.</title>
        <authorList>
            <person name="Theologis A."/>
            <person name="Ecker J.R."/>
            <person name="Palm C.J."/>
            <person name="Federspiel N.A."/>
            <person name="Kaul S."/>
            <person name="White O."/>
            <person name="Alonso J."/>
            <person name="Altafi H."/>
            <person name="Araujo R."/>
            <person name="Bowman C.L."/>
            <person name="Brooks S.Y."/>
            <person name="Buehler E."/>
            <person name="Chan A."/>
            <person name="Chao Q."/>
            <person name="Chen H."/>
            <person name="Cheuk R.F."/>
            <person name="Chin C.W."/>
            <person name="Chung M.K."/>
            <person name="Conn L."/>
            <person name="Conway A.B."/>
            <person name="Conway A.R."/>
            <person name="Creasy T.H."/>
            <person name="Dewar K."/>
            <person name="Dunn P."/>
            <person name="Etgu P."/>
            <person name="Feldblyum T.V."/>
            <person name="Feng J.-D."/>
            <person name="Fong B."/>
            <person name="Fujii C.Y."/>
            <person name="Gill J.E."/>
            <person name="Goldsmith A.D."/>
            <person name="Haas B."/>
            <person name="Hansen N.F."/>
            <person name="Hughes B."/>
            <person name="Huizar L."/>
            <person name="Hunter J.L."/>
            <person name="Jenkins J."/>
            <person name="Johnson-Hopson C."/>
            <person name="Khan S."/>
            <person name="Khaykin E."/>
            <person name="Kim C.J."/>
            <person name="Koo H.L."/>
            <person name="Kremenetskaia I."/>
            <person name="Kurtz D.B."/>
            <person name="Kwan A."/>
            <person name="Lam B."/>
            <person name="Langin-Hooper S."/>
            <person name="Lee A."/>
            <person name="Lee J.M."/>
            <person name="Lenz C.A."/>
            <person name="Li J.H."/>
            <person name="Li Y.-P."/>
            <person name="Lin X."/>
            <person name="Liu S.X."/>
            <person name="Liu Z.A."/>
            <person name="Luros J.S."/>
            <person name="Maiti R."/>
            <person name="Marziali A."/>
            <person name="Militscher J."/>
            <person name="Miranda M."/>
            <person name="Nguyen M."/>
            <person name="Nierman W.C."/>
            <person name="Osborne B.I."/>
            <person name="Pai G."/>
            <person name="Peterson J."/>
            <person name="Pham P.K."/>
            <person name="Rizzo M."/>
            <person name="Rooney T."/>
            <person name="Rowley D."/>
            <person name="Sakano H."/>
            <person name="Salzberg S.L."/>
            <person name="Schwartz J.R."/>
            <person name="Shinn P."/>
            <person name="Southwick A.M."/>
            <person name="Sun H."/>
            <person name="Tallon L.J."/>
            <person name="Tambunga G."/>
            <person name="Toriumi M.J."/>
            <person name="Town C.D."/>
            <person name="Utterback T."/>
            <person name="Van Aken S."/>
            <person name="Vaysberg M."/>
            <person name="Vysotskaia V.S."/>
            <person name="Walker M."/>
            <person name="Wu D."/>
            <person name="Yu G."/>
            <person name="Fraser C.M."/>
            <person name="Venter J.C."/>
            <person name="Davis R.W."/>
        </authorList>
    </citation>
    <scope>NUCLEOTIDE SEQUENCE [LARGE SCALE GENOMIC DNA]</scope>
    <source>
        <strain>cv. Columbia</strain>
    </source>
</reference>
<reference key="2">
    <citation type="journal article" date="2017" name="Plant J.">
        <title>Araport11: a complete reannotation of the Arabidopsis thaliana reference genome.</title>
        <authorList>
            <person name="Cheng C.Y."/>
            <person name="Krishnakumar V."/>
            <person name="Chan A.P."/>
            <person name="Thibaud-Nissen F."/>
            <person name="Schobel S."/>
            <person name="Town C.D."/>
        </authorList>
    </citation>
    <scope>GENOME REANNOTATION</scope>
    <source>
        <strain>cv. Columbia</strain>
    </source>
</reference>
<comment type="alternative products">
    <event type="alternative splicing"/>
    <isoform>
        <id>F4I0N3-1</id>
        <name>1</name>
        <sequence type="displayed"/>
    </isoform>
    <text>A number of isoforms are produced. According to EST sequences.</text>
</comment>
<comment type="similarity">
    <text evidence="3">Belongs to the WEB family.</text>
</comment>
<comment type="sequence caution" evidence="3">
    <conflict type="erroneous gene model prediction">
        <sequence resource="EMBL-CDS" id="AAF87110"/>
    </conflict>
</comment>
<feature type="chain" id="PRO_0000414068" description="WEB family protein At1g75720">
    <location>
        <begin position="1"/>
        <end position="193"/>
    </location>
</feature>
<feature type="region of interest" description="Disordered" evidence="2">
    <location>
        <begin position="152"/>
        <end position="174"/>
    </location>
</feature>
<feature type="coiled-coil region" evidence="1">
    <location>
        <begin position="57"/>
        <end position="99"/>
    </location>
</feature>
<feature type="compositionally biased region" description="Basic residues" evidence="2">
    <location>
        <begin position="161"/>
        <end position="174"/>
    </location>
</feature>
<sequence>MMETTKRAEIDTTAPFRTVKEAVALFGERVLASQVYSNHLKVMHDEKWEDPSGIKIELQETRYDLKRAKEESIQMRNSLSCLKEELERTKQELQKLRVDPGVNETKLDETVFKTKFEVLVPRVDDEPIRSPRLRSMSEKRYVKFANPTGNNGSVFLERHPSMKKKEKKTKDKKKKSLIPLFIGGIFSKKKVLQ</sequence>